<protein>
    <recommendedName>
        <fullName evidence="1">Hydroxyethylthiazole kinase</fullName>
        <ecNumber evidence="1">2.7.1.50</ecNumber>
    </recommendedName>
    <alternativeName>
        <fullName evidence="1">4-methyl-5-beta-hydroxyethylthiazole kinase</fullName>
        <shortName evidence="1">TH kinase</shortName>
        <shortName evidence="1">Thz kinase</shortName>
    </alternativeName>
</protein>
<reference key="1">
    <citation type="journal article" date="2006" name="PLoS Genet.">
        <title>The complete genome sequence and comparative genome analysis of the high pathogenicity Yersinia enterocolitica strain 8081.</title>
        <authorList>
            <person name="Thomson N.R."/>
            <person name="Howard S."/>
            <person name="Wren B.W."/>
            <person name="Holden M.T.G."/>
            <person name="Crossman L."/>
            <person name="Challis G.L."/>
            <person name="Churcher C."/>
            <person name="Mungall K."/>
            <person name="Brooks K."/>
            <person name="Chillingworth T."/>
            <person name="Feltwell T."/>
            <person name="Abdellah Z."/>
            <person name="Hauser H."/>
            <person name="Jagels K."/>
            <person name="Maddison M."/>
            <person name="Moule S."/>
            <person name="Sanders M."/>
            <person name="Whitehead S."/>
            <person name="Quail M.A."/>
            <person name="Dougan G."/>
            <person name="Parkhill J."/>
            <person name="Prentice M.B."/>
        </authorList>
    </citation>
    <scope>NUCLEOTIDE SEQUENCE [LARGE SCALE GENOMIC DNA]</scope>
    <source>
        <strain>NCTC 13174 / 8081</strain>
    </source>
</reference>
<gene>
    <name evidence="1" type="primary">thiM</name>
    <name type="ordered locus">YE3599</name>
</gene>
<organism>
    <name type="scientific">Yersinia enterocolitica serotype O:8 / biotype 1B (strain NCTC 13174 / 8081)</name>
    <dbReference type="NCBI Taxonomy" id="393305"/>
    <lineage>
        <taxon>Bacteria</taxon>
        <taxon>Pseudomonadati</taxon>
        <taxon>Pseudomonadota</taxon>
        <taxon>Gammaproteobacteria</taxon>
        <taxon>Enterobacterales</taxon>
        <taxon>Yersiniaceae</taxon>
        <taxon>Yersinia</taxon>
    </lineage>
</organism>
<sequence>MMDLFPDALASACLQQFRATPPLVHCLTNEVVQSFTANVLLALGAFPAMVVEPQEAAQFSTMANSLLINIGTLHRARAESMLSAITAANQAGTPWVLDPVAVGGLAYRTDFARHLLTLKPAAIRGNASEIMALSGMATMGRGVDSVDTSLAALPAARQLAQRTQTVVAVTGEVDYITDGQRDVAVTGGDKLMTRVVGTGCALSAVVAAFCALEGDRLHHVATACRIMSQVGGQVSQHVAGPGSFVPAFLDGLYQLETLTY</sequence>
<name>THIM_YERE8</name>
<evidence type="ECO:0000255" key="1">
    <source>
        <dbReference type="HAMAP-Rule" id="MF_00228"/>
    </source>
</evidence>
<keyword id="KW-0067">ATP-binding</keyword>
<keyword id="KW-0418">Kinase</keyword>
<keyword id="KW-0460">Magnesium</keyword>
<keyword id="KW-0479">Metal-binding</keyword>
<keyword id="KW-0547">Nucleotide-binding</keyword>
<keyword id="KW-0784">Thiamine biosynthesis</keyword>
<keyword id="KW-0808">Transferase</keyword>
<comment type="function">
    <text evidence="1">Catalyzes the phosphorylation of the hydroxyl group of 4-methyl-5-beta-hydroxyethylthiazole (THZ).</text>
</comment>
<comment type="catalytic activity">
    <reaction evidence="1">
        <text>5-(2-hydroxyethyl)-4-methylthiazole + ATP = 4-methyl-5-(2-phosphooxyethyl)-thiazole + ADP + H(+)</text>
        <dbReference type="Rhea" id="RHEA:24212"/>
        <dbReference type="ChEBI" id="CHEBI:15378"/>
        <dbReference type="ChEBI" id="CHEBI:17957"/>
        <dbReference type="ChEBI" id="CHEBI:30616"/>
        <dbReference type="ChEBI" id="CHEBI:58296"/>
        <dbReference type="ChEBI" id="CHEBI:456216"/>
        <dbReference type="EC" id="2.7.1.50"/>
    </reaction>
</comment>
<comment type="cofactor">
    <cofactor evidence="1">
        <name>Mg(2+)</name>
        <dbReference type="ChEBI" id="CHEBI:18420"/>
    </cofactor>
</comment>
<comment type="pathway">
    <text evidence="1">Cofactor biosynthesis; thiamine diphosphate biosynthesis; 4-methyl-5-(2-phosphoethyl)-thiazole from 5-(2-hydroxyethyl)-4-methylthiazole: step 1/1.</text>
</comment>
<comment type="similarity">
    <text evidence="1">Belongs to the Thz kinase family.</text>
</comment>
<dbReference type="EC" id="2.7.1.50" evidence="1"/>
<dbReference type="EMBL" id="AM286415">
    <property type="protein sequence ID" value="CAL13625.1"/>
    <property type="molecule type" value="Genomic_DNA"/>
</dbReference>
<dbReference type="RefSeq" id="YP_001007758.1">
    <property type="nucleotide sequence ID" value="NC_008800.1"/>
</dbReference>
<dbReference type="SMR" id="A1JQJ2"/>
<dbReference type="KEGG" id="yen:YE3599"/>
<dbReference type="PATRIC" id="fig|393305.7.peg.3828"/>
<dbReference type="eggNOG" id="COG2145">
    <property type="taxonomic scope" value="Bacteria"/>
</dbReference>
<dbReference type="HOGENOM" id="CLU_019943_0_1_6"/>
<dbReference type="OrthoDB" id="8909021at2"/>
<dbReference type="UniPathway" id="UPA00060">
    <property type="reaction ID" value="UER00139"/>
</dbReference>
<dbReference type="Proteomes" id="UP000000642">
    <property type="component" value="Chromosome"/>
</dbReference>
<dbReference type="GO" id="GO:0005524">
    <property type="term" value="F:ATP binding"/>
    <property type="evidence" value="ECO:0007669"/>
    <property type="project" value="UniProtKB-UniRule"/>
</dbReference>
<dbReference type="GO" id="GO:0004417">
    <property type="term" value="F:hydroxyethylthiazole kinase activity"/>
    <property type="evidence" value="ECO:0007669"/>
    <property type="project" value="UniProtKB-UniRule"/>
</dbReference>
<dbReference type="GO" id="GO:0000287">
    <property type="term" value="F:magnesium ion binding"/>
    <property type="evidence" value="ECO:0007669"/>
    <property type="project" value="UniProtKB-UniRule"/>
</dbReference>
<dbReference type="GO" id="GO:0009228">
    <property type="term" value="P:thiamine biosynthetic process"/>
    <property type="evidence" value="ECO:0007669"/>
    <property type="project" value="UniProtKB-KW"/>
</dbReference>
<dbReference type="GO" id="GO:0009229">
    <property type="term" value="P:thiamine diphosphate biosynthetic process"/>
    <property type="evidence" value="ECO:0007669"/>
    <property type="project" value="UniProtKB-UniRule"/>
</dbReference>
<dbReference type="CDD" id="cd01170">
    <property type="entry name" value="THZ_kinase"/>
    <property type="match status" value="1"/>
</dbReference>
<dbReference type="Gene3D" id="3.40.1190.20">
    <property type="match status" value="1"/>
</dbReference>
<dbReference type="HAMAP" id="MF_00228">
    <property type="entry name" value="Thz_kinase"/>
    <property type="match status" value="1"/>
</dbReference>
<dbReference type="InterPro" id="IPR000417">
    <property type="entry name" value="Hyethyz_kinase"/>
</dbReference>
<dbReference type="InterPro" id="IPR029056">
    <property type="entry name" value="Ribokinase-like"/>
</dbReference>
<dbReference type="NCBIfam" id="NF006830">
    <property type="entry name" value="PRK09355.1"/>
    <property type="match status" value="1"/>
</dbReference>
<dbReference type="NCBIfam" id="TIGR00694">
    <property type="entry name" value="thiM"/>
    <property type="match status" value="1"/>
</dbReference>
<dbReference type="Pfam" id="PF02110">
    <property type="entry name" value="HK"/>
    <property type="match status" value="1"/>
</dbReference>
<dbReference type="PIRSF" id="PIRSF000513">
    <property type="entry name" value="Thz_kinase"/>
    <property type="match status" value="1"/>
</dbReference>
<dbReference type="PRINTS" id="PR01099">
    <property type="entry name" value="HYETHTZKNASE"/>
</dbReference>
<dbReference type="SUPFAM" id="SSF53613">
    <property type="entry name" value="Ribokinase-like"/>
    <property type="match status" value="1"/>
</dbReference>
<feature type="chain" id="PRO_0000336576" description="Hydroxyethylthiazole kinase">
    <location>
        <begin position="1"/>
        <end position="260"/>
    </location>
</feature>
<feature type="binding site" evidence="1">
    <location>
        <position position="49"/>
    </location>
    <ligand>
        <name>substrate</name>
    </ligand>
</feature>
<feature type="binding site" evidence="1">
    <location>
        <position position="124"/>
    </location>
    <ligand>
        <name>ATP</name>
        <dbReference type="ChEBI" id="CHEBI:30616"/>
    </ligand>
</feature>
<feature type="binding site" evidence="1">
    <location>
        <position position="170"/>
    </location>
    <ligand>
        <name>ATP</name>
        <dbReference type="ChEBI" id="CHEBI:30616"/>
    </ligand>
</feature>
<feature type="binding site" evidence="1">
    <location>
        <position position="197"/>
    </location>
    <ligand>
        <name>substrate</name>
    </ligand>
</feature>
<accession>A1JQJ2</accession>
<proteinExistence type="inferred from homology"/>